<reference key="1">
    <citation type="submission" date="2008-08" db="EMBL/GenBank/DDBJ databases">
        <title>Complete sequence of Vibrio fischeri strain MJ11.</title>
        <authorList>
            <person name="Mandel M.J."/>
            <person name="Stabb E.V."/>
            <person name="Ruby E.G."/>
            <person name="Ferriera S."/>
            <person name="Johnson J."/>
            <person name="Kravitz S."/>
            <person name="Beeson K."/>
            <person name="Sutton G."/>
            <person name="Rogers Y.-H."/>
            <person name="Friedman R."/>
            <person name="Frazier M."/>
            <person name="Venter J.C."/>
        </authorList>
    </citation>
    <scope>NUCLEOTIDE SEQUENCE [LARGE SCALE GENOMIC DNA]</scope>
    <source>
        <strain>MJ11</strain>
    </source>
</reference>
<organism>
    <name type="scientific">Aliivibrio fischeri (strain MJ11)</name>
    <name type="common">Vibrio fischeri</name>
    <dbReference type="NCBI Taxonomy" id="388396"/>
    <lineage>
        <taxon>Bacteria</taxon>
        <taxon>Pseudomonadati</taxon>
        <taxon>Pseudomonadota</taxon>
        <taxon>Gammaproteobacteria</taxon>
        <taxon>Vibrionales</taxon>
        <taxon>Vibrionaceae</taxon>
        <taxon>Aliivibrio</taxon>
    </lineage>
</organism>
<sequence>MSNQIKLLVGLANPGLEYKRTRHNAGAWVVEELARVHNVSMREESKFFGLTGRIQSNGDDLRLLIPTTFMNLSGKGIAAMAKFYQIKPEEILVAHDELDLPPGVAKFKKGGGHGGHNGLRDTISKLANTKEFYRLRIGIGHPGHKDKVAGFVLGKAPTKEQELIDAAVDESTRCLDILLKDGLSKAQNRLHTFKAE</sequence>
<evidence type="ECO:0000255" key="1">
    <source>
        <dbReference type="HAMAP-Rule" id="MF_00083"/>
    </source>
</evidence>
<name>PTH_ALIFM</name>
<gene>
    <name evidence="1" type="primary">pth</name>
    <name type="ordered locus">VFMJ11_0799</name>
</gene>
<keyword id="KW-0963">Cytoplasm</keyword>
<keyword id="KW-0378">Hydrolase</keyword>
<keyword id="KW-0694">RNA-binding</keyword>
<keyword id="KW-0820">tRNA-binding</keyword>
<feature type="chain" id="PRO_1000093001" description="Peptidyl-tRNA hydrolase">
    <location>
        <begin position="1"/>
        <end position="196"/>
    </location>
</feature>
<feature type="active site" description="Proton acceptor" evidence="1">
    <location>
        <position position="23"/>
    </location>
</feature>
<feature type="binding site" evidence="1">
    <location>
        <position position="18"/>
    </location>
    <ligand>
        <name>tRNA</name>
        <dbReference type="ChEBI" id="CHEBI:17843"/>
    </ligand>
</feature>
<feature type="binding site" evidence="1">
    <location>
        <position position="69"/>
    </location>
    <ligand>
        <name>tRNA</name>
        <dbReference type="ChEBI" id="CHEBI:17843"/>
    </ligand>
</feature>
<feature type="binding site" evidence="1">
    <location>
        <position position="71"/>
    </location>
    <ligand>
        <name>tRNA</name>
        <dbReference type="ChEBI" id="CHEBI:17843"/>
    </ligand>
</feature>
<feature type="binding site" evidence="1">
    <location>
        <position position="117"/>
    </location>
    <ligand>
        <name>tRNA</name>
        <dbReference type="ChEBI" id="CHEBI:17843"/>
    </ligand>
</feature>
<feature type="site" description="Discriminates between blocked and unblocked aminoacyl-tRNA" evidence="1">
    <location>
        <position position="13"/>
    </location>
</feature>
<feature type="site" description="Stabilizes the basic form of H active site to accept a proton" evidence="1">
    <location>
        <position position="96"/>
    </location>
</feature>
<dbReference type="EC" id="3.1.1.29" evidence="1"/>
<dbReference type="EMBL" id="CP001139">
    <property type="protein sequence ID" value="ACH66008.1"/>
    <property type="molecule type" value="Genomic_DNA"/>
</dbReference>
<dbReference type="RefSeq" id="WP_012533430.1">
    <property type="nucleotide sequence ID" value="NC_011184.1"/>
</dbReference>
<dbReference type="SMR" id="B5FBW5"/>
<dbReference type="KEGG" id="vfm:VFMJ11_0799"/>
<dbReference type="HOGENOM" id="CLU_062456_3_1_6"/>
<dbReference type="Proteomes" id="UP000001857">
    <property type="component" value="Chromosome I"/>
</dbReference>
<dbReference type="GO" id="GO:0005737">
    <property type="term" value="C:cytoplasm"/>
    <property type="evidence" value="ECO:0007669"/>
    <property type="project" value="UniProtKB-SubCell"/>
</dbReference>
<dbReference type="GO" id="GO:0004045">
    <property type="term" value="F:peptidyl-tRNA hydrolase activity"/>
    <property type="evidence" value="ECO:0007669"/>
    <property type="project" value="UniProtKB-UniRule"/>
</dbReference>
<dbReference type="GO" id="GO:0000049">
    <property type="term" value="F:tRNA binding"/>
    <property type="evidence" value="ECO:0007669"/>
    <property type="project" value="UniProtKB-UniRule"/>
</dbReference>
<dbReference type="GO" id="GO:0006515">
    <property type="term" value="P:protein quality control for misfolded or incompletely synthesized proteins"/>
    <property type="evidence" value="ECO:0007669"/>
    <property type="project" value="UniProtKB-UniRule"/>
</dbReference>
<dbReference type="GO" id="GO:0072344">
    <property type="term" value="P:rescue of stalled ribosome"/>
    <property type="evidence" value="ECO:0007669"/>
    <property type="project" value="UniProtKB-UniRule"/>
</dbReference>
<dbReference type="CDD" id="cd00462">
    <property type="entry name" value="PTH"/>
    <property type="match status" value="1"/>
</dbReference>
<dbReference type="FunFam" id="3.40.50.1470:FF:000001">
    <property type="entry name" value="Peptidyl-tRNA hydrolase"/>
    <property type="match status" value="1"/>
</dbReference>
<dbReference type="Gene3D" id="3.40.50.1470">
    <property type="entry name" value="Peptidyl-tRNA hydrolase"/>
    <property type="match status" value="1"/>
</dbReference>
<dbReference type="HAMAP" id="MF_00083">
    <property type="entry name" value="Pept_tRNA_hydro_bact"/>
    <property type="match status" value="1"/>
</dbReference>
<dbReference type="InterPro" id="IPR001328">
    <property type="entry name" value="Pept_tRNA_hydro"/>
</dbReference>
<dbReference type="InterPro" id="IPR018171">
    <property type="entry name" value="Pept_tRNA_hydro_CS"/>
</dbReference>
<dbReference type="InterPro" id="IPR036416">
    <property type="entry name" value="Pept_tRNA_hydro_sf"/>
</dbReference>
<dbReference type="NCBIfam" id="TIGR00447">
    <property type="entry name" value="pth"/>
    <property type="match status" value="1"/>
</dbReference>
<dbReference type="PANTHER" id="PTHR17224">
    <property type="entry name" value="PEPTIDYL-TRNA HYDROLASE"/>
    <property type="match status" value="1"/>
</dbReference>
<dbReference type="PANTHER" id="PTHR17224:SF1">
    <property type="entry name" value="PEPTIDYL-TRNA HYDROLASE"/>
    <property type="match status" value="1"/>
</dbReference>
<dbReference type="Pfam" id="PF01195">
    <property type="entry name" value="Pept_tRNA_hydro"/>
    <property type="match status" value="1"/>
</dbReference>
<dbReference type="SUPFAM" id="SSF53178">
    <property type="entry name" value="Peptidyl-tRNA hydrolase-like"/>
    <property type="match status" value="1"/>
</dbReference>
<dbReference type="PROSITE" id="PS01195">
    <property type="entry name" value="PEPT_TRNA_HYDROL_1"/>
    <property type="match status" value="1"/>
</dbReference>
<dbReference type="PROSITE" id="PS01196">
    <property type="entry name" value="PEPT_TRNA_HYDROL_2"/>
    <property type="match status" value="1"/>
</dbReference>
<comment type="function">
    <text evidence="1">Hydrolyzes ribosome-free peptidyl-tRNAs (with 1 or more amino acids incorporated), which drop off the ribosome during protein synthesis, or as a result of ribosome stalling.</text>
</comment>
<comment type="function">
    <text evidence="1">Catalyzes the release of premature peptidyl moieties from peptidyl-tRNA molecules trapped in stalled 50S ribosomal subunits, and thus maintains levels of free tRNAs and 50S ribosomes.</text>
</comment>
<comment type="catalytic activity">
    <reaction evidence="1">
        <text>an N-acyl-L-alpha-aminoacyl-tRNA + H2O = an N-acyl-L-amino acid + a tRNA + H(+)</text>
        <dbReference type="Rhea" id="RHEA:54448"/>
        <dbReference type="Rhea" id="RHEA-COMP:10123"/>
        <dbReference type="Rhea" id="RHEA-COMP:13883"/>
        <dbReference type="ChEBI" id="CHEBI:15377"/>
        <dbReference type="ChEBI" id="CHEBI:15378"/>
        <dbReference type="ChEBI" id="CHEBI:59874"/>
        <dbReference type="ChEBI" id="CHEBI:78442"/>
        <dbReference type="ChEBI" id="CHEBI:138191"/>
        <dbReference type="EC" id="3.1.1.29"/>
    </reaction>
</comment>
<comment type="subunit">
    <text evidence="1">Monomer.</text>
</comment>
<comment type="subcellular location">
    <subcellularLocation>
        <location evidence="1">Cytoplasm</location>
    </subcellularLocation>
</comment>
<comment type="similarity">
    <text evidence="1">Belongs to the PTH family.</text>
</comment>
<proteinExistence type="inferred from homology"/>
<accession>B5FBW5</accession>
<protein>
    <recommendedName>
        <fullName evidence="1">Peptidyl-tRNA hydrolase</fullName>
        <shortName evidence="1">Pth</shortName>
        <ecNumber evidence="1">3.1.1.29</ecNumber>
    </recommendedName>
</protein>